<name>CLPP_METNO</name>
<sequence length="209" mass="23190">MRDPVEFYNSALVPMVVEQSSRGERAFDIYSRLLRERIIFLTGPVEDYSASLIVAQLLFLEAENPKKEISFYINSPGGVVTSGLSIYDTMQFIRCPVATLCVGQAASMGSLLLAAGEPGHRFALPNARIMVHQPSGGFQGQATDILIHAREIEALKRRLNEIYVKHTGRDYDTIELGLERDNFMTADAAREWGLIDEVLQKRAEASPAA</sequence>
<accession>B8IN26</accession>
<feature type="chain" id="PRO_1000135161" description="ATP-dependent Clp protease proteolytic subunit">
    <location>
        <begin position="1"/>
        <end position="209"/>
    </location>
</feature>
<feature type="active site" description="Nucleophile" evidence="1">
    <location>
        <position position="107"/>
    </location>
</feature>
<feature type="active site" evidence="1">
    <location>
        <position position="132"/>
    </location>
</feature>
<gene>
    <name evidence="1" type="primary">clpP</name>
    <name type="ordered locus">Mnod_7405</name>
</gene>
<reference key="1">
    <citation type="submission" date="2009-01" db="EMBL/GenBank/DDBJ databases">
        <title>Complete sequence of chromosome of Methylobacterium nodulans ORS 2060.</title>
        <authorList>
            <consortium name="US DOE Joint Genome Institute"/>
            <person name="Lucas S."/>
            <person name="Copeland A."/>
            <person name="Lapidus A."/>
            <person name="Glavina del Rio T."/>
            <person name="Dalin E."/>
            <person name="Tice H."/>
            <person name="Bruce D."/>
            <person name="Goodwin L."/>
            <person name="Pitluck S."/>
            <person name="Sims D."/>
            <person name="Brettin T."/>
            <person name="Detter J.C."/>
            <person name="Han C."/>
            <person name="Larimer F."/>
            <person name="Land M."/>
            <person name="Hauser L."/>
            <person name="Kyrpides N."/>
            <person name="Ivanova N."/>
            <person name="Marx C.J."/>
            <person name="Richardson P."/>
        </authorList>
    </citation>
    <scope>NUCLEOTIDE SEQUENCE [LARGE SCALE GENOMIC DNA]</scope>
    <source>
        <strain>LMG 21967 / CNCM I-2342 / ORS 2060</strain>
    </source>
</reference>
<keyword id="KW-0963">Cytoplasm</keyword>
<keyword id="KW-0378">Hydrolase</keyword>
<keyword id="KW-0645">Protease</keyword>
<keyword id="KW-1185">Reference proteome</keyword>
<keyword id="KW-0720">Serine protease</keyword>
<proteinExistence type="inferred from homology"/>
<comment type="function">
    <text evidence="1">Cleaves peptides in various proteins in a process that requires ATP hydrolysis. Has a chymotrypsin-like activity. Plays a major role in the degradation of misfolded proteins.</text>
</comment>
<comment type="catalytic activity">
    <reaction evidence="1">
        <text>Hydrolysis of proteins to small peptides in the presence of ATP and magnesium. alpha-casein is the usual test substrate. In the absence of ATP, only oligopeptides shorter than five residues are hydrolyzed (such as succinyl-Leu-Tyr-|-NHMec, and Leu-Tyr-Leu-|-Tyr-Trp, in which cleavage of the -Tyr-|-Leu- and -Tyr-|-Trp bonds also occurs).</text>
        <dbReference type="EC" id="3.4.21.92"/>
    </reaction>
</comment>
<comment type="subunit">
    <text evidence="1">Fourteen ClpP subunits assemble into 2 heptameric rings which stack back to back to give a disk-like structure with a central cavity, resembling the structure of eukaryotic proteasomes.</text>
</comment>
<comment type="subcellular location">
    <subcellularLocation>
        <location evidence="1">Cytoplasm</location>
    </subcellularLocation>
</comment>
<comment type="similarity">
    <text evidence="1">Belongs to the peptidase S14 family.</text>
</comment>
<protein>
    <recommendedName>
        <fullName evidence="1">ATP-dependent Clp protease proteolytic subunit</fullName>
        <ecNumber evidence="1">3.4.21.92</ecNumber>
    </recommendedName>
    <alternativeName>
        <fullName evidence="1">Endopeptidase Clp</fullName>
    </alternativeName>
</protein>
<dbReference type="EC" id="3.4.21.92" evidence="1"/>
<dbReference type="EMBL" id="CP001349">
    <property type="protein sequence ID" value="ACL62142.1"/>
    <property type="molecule type" value="Genomic_DNA"/>
</dbReference>
<dbReference type="RefSeq" id="WP_015933700.1">
    <property type="nucleotide sequence ID" value="NC_011894.1"/>
</dbReference>
<dbReference type="SMR" id="B8IN26"/>
<dbReference type="STRING" id="460265.Mnod_7405"/>
<dbReference type="MEROPS" id="S14.001"/>
<dbReference type="KEGG" id="mno:Mnod_7405"/>
<dbReference type="eggNOG" id="COG0740">
    <property type="taxonomic scope" value="Bacteria"/>
</dbReference>
<dbReference type="HOGENOM" id="CLU_058707_3_2_5"/>
<dbReference type="OrthoDB" id="9802800at2"/>
<dbReference type="Proteomes" id="UP000008207">
    <property type="component" value="Chromosome"/>
</dbReference>
<dbReference type="GO" id="GO:0005737">
    <property type="term" value="C:cytoplasm"/>
    <property type="evidence" value="ECO:0007669"/>
    <property type="project" value="UniProtKB-SubCell"/>
</dbReference>
<dbReference type="GO" id="GO:0009368">
    <property type="term" value="C:endopeptidase Clp complex"/>
    <property type="evidence" value="ECO:0007669"/>
    <property type="project" value="TreeGrafter"/>
</dbReference>
<dbReference type="GO" id="GO:0004176">
    <property type="term" value="F:ATP-dependent peptidase activity"/>
    <property type="evidence" value="ECO:0007669"/>
    <property type="project" value="InterPro"/>
</dbReference>
<dbReference type="GO" id="GO:0051117">
    <property type="term" value="F:ATPase binding"/>
    <property type="evidence" value="ECO:0007669"/>
    <property type="project" value="TreeGrafter"/>
</dbReference>
<dbReference type="GO" id="GO:0004252">
    <property type="term" value="F:serine-type endopeptidase activity"/>
    <property type="evidence" value="ECO:0007669"/>
    <property type="project" value="UniProtKB-UniRule"/>
</dbReference>
<dbReference type="GO" id="GO:0006515">
    <property type="term" value="P:protein quality control for misfolded or incompletely synthesized proteins"/>
    <property type="evidence" value="ECO:0007669"/>
    <property type="project" value="TreeGrafter"/>
</dbReference>
<dbReference type="CDD" id="cd07017">
    <property type="entry name" value="S14_ClpP_2"/>
    <property type="match status" value="1"/>
</dbReference>
<dbReference type="FunFam" id="3.90.226.10:FF:000001">
    <property type="entry name" value="ATP-dependent Clp protease proteolytic subunit"/>
    <property type="match status" value="1"/>
</dbReference>
<dbReference type="Gene3D" id="3.90.226.10">
    <property type="entry name" value="2-enoyl-CoA Hydratase, Chain A, domain 1"/>
    <property type="match status" value="1"/>
</dbReference>
<dbReference type="HAMAP" id="MF_00444">
    <property type="entry name" value="ClpP"/>
    <property type="match status" value="1"/>
</dbReference>
<dbReference type="InterPro" id="IPR001907">
    <property type="entry name" value="ClpP"/>
</dbReference>
<dbReference type="InterPro" id="IPR029045">
    <property type="entry name" value="ClpP/crotonase-like_dom_sf"/>
</dbReference>
<dbReference type="InterPro" id="IPR023562">
    <property type="entry name" value="ClpP/TepA"/>
</dbReference>
<dbReference type="InterPro" id="IPR033135">
    <property type="entry name" value="ClpP_His_AS"/>
</dbReference>
<dbReference type="InterPro" id="IPR018215">
    <property type="entry name" value="ClpP_Ser_AS"/>
</dbReference>
<dbReference type="NCBIfam" id="NF001368">
    <property type="entry name" value="PRK00277.1"/>
    <property type="match status" value="1"/>
</dbReference>
<dbReference type="NCBIfam" id="NF009205">
    <property type="entry name" value="PRK12553.1"/>
    <property type="match status" value="1"/>
</dbReference>
<dbReference type="PANTHER" id="PTHR10381">
    <property type="entry name" value="ATP-DEPENDENT CLP PROTEASE PROTEOLYTIC SUBUNIT"/>
    <property type="match status" value="1"/>
</dbReference>
<dbReference type="PANTHER" id="PTHR10381:SF70">
    <property type="entry name" value="ATP-DEPENDENT CLP PROTEASE PROTEOLYTIC SUBUNIT"/>
    <property type="match status" value="1"/>
</dbReference>
<dbReference type="Pfam" id="PF00574">
    <property type="entry name" value="CLP_protease"/>
    <property type="match status" value="1"/>
</dbReference>
<dbReference type="PRINTS" id="PR00127">
    <property type="entry name" value="CLPPROTEASEP"/>
</dbReference>
<dbReference type="SUPFAM" id="SSF52096">
    <property type="entry name" value="ClpP/crotonase"/>
    <property type="match status" value="1"/>
</dbReference>
<dbReference type="PROSITE" id="PS00382">
    <property type="entry name" value="CLP_PROTEASE_HIS"/>
    <property type="match status" value="1"/>
</dbReference>
<dbReference type="PROSITE" id="PS00381">
    <property type="entry name" value="CLP_PROTEASE_SER"/>
    <property type="match status" value="1"/>
</dbReference>
<organism>
    <name type="scientific">Methylobacterium nodulans (strain LMG 21967 / CNCM I-2342 / ORS 2060)</name>
    <dbReference type="NCBI Taxonomy" id="460265"/>
    <lineage>
        <taxon>Bacteria</taxon>
        <taxon>Pseudomonadati</taxon>
        <taxon>Pseudomonadota</taxon>
        <taxon>Alphaproteobacteria</taxon>
        <taxon>Hyphomicrobiales</taxon>
        <taxon>Methylobacteriaceae</taxon>
        <taxon>Methylobacterium</taxon>
    </lineage>
</organism>
<evidence type="ECO:0000255" key="1">
    <source>
        <dbReference type="HAMAP-Rule" id="MF_00444"/>
    </source>
</evidence>